<evidence type="ECO:0000255" key="1">
    <source>
        <dbReference type="HAMAP-Rule" id="MF_00598"/>
    </source>
</evidence>
<organism>
    <name type="scientific">Sodalis glossinidius (strain morsitans)</name>
    <dbReference type="NCBI Taxonomy" id="343509"/>
    <lineage>
        <taxon>Bacteria</taxon>
        <taxon>Pseudomonadati</taxon>
        <taxon>Pseudomonadota</taxon>
        <taxon>Gammaproteobacteria</taxon>
        <taxon>Enterobacterales</taxon>
        <taxon>Bruguierivoracaceae</taxon>
        <taxon>Sodalis</taxon>
    </lineage>
</organism>
<comment type="similarity">
    <text evidence="1">Belongs to the Smg family.</text>
</comment>
<gene>
    <name evidence="1" type="primary">smg</name>
    <name type="ordered locus">SG2245</name>
</gene>
<feature type="chain" id="PRO_1000025677" description="Protein Smg">
    <location>
        <begin position="1"/>
        <end position="157"/>
    </location>
</feature>
<protein>
    <recommendedName>
        <fullName evidence="1">Protein Smg</fullName>
    </recommendedName>
</protein>
<dbReference type="EMBL" id="AP008232">
    <property type="protein sequence ID" value="BAE75520.1"/>
    <property type="molecule type" value="Genomic_DNA"/>
</dbReference>
<dbReference type="RefSeq" id="WP_011412056.1">
    <property type="nucleotide sequence ID" value="NC_007712.1"/>
</dbReference>
<dbReference type="SMR" id="Q2NQQ5"/>
<dbReference type="STRING" id="343509.SG2245"/>
<dbReference type="KEGG" id="sgl:SG2245"/>
<dbReference type="eggNOG" id="COG2922">
    <property type="taxonomic scope" value="Bacteria"/>
</dbReference>
<dbReference type="HOGENOM" id="CLU_133242_0_0_6"/>
<dbReference type="OrthoDB" id="9788984at2"/>
<dbReference type="BioCyc" id="SGLO343509:SGP1_RS20660-MONOMER"/>
<dbReference type="Proteomes" id="UP000001932">
    <property type="component" value="Chromosome"/>
</dbReference>
<dbReference type="HAMAP" id="MF_00598">
    <property type="entry name" value="Smg"/>
    <property type="match status" value="1"/>
</dbReference>
<dbReference type="InterPro" id="IPR007456">
    <property type="entry name" value="Smg"/>
</dbReference>
<dbReference type="NCBIfam" id="NF002897">
    <property type="entry name" value="PRK03430.1"/>
    <property type="match status" value="1"/>
</dbReference>
<dbReference type="PANTHER" id="PTHR38692">
    <property type="entry name" value="PROTEIN SMG"/>
    <property type="match status" value="1"/>
</dbReference>
<dbReference type="PANTHER" id="PTHR38692:SF1">
    <property type="entry name" value="PROTEIN SMG"/>
    <property type="match status" value="1"/>
</dbReference>
<dbReference type="Pfam" id="PF04361">
    <property type="entry name" value="DUF494"/>
    <property type="match status" value="1"/>
</dbReference>
<proteinExistence type="inferred from homology"/>
<accession>Q2NQQ5</accession>
<name>SMG_SODGM</name>
<reference key="1">
    <citation type="journal article" date="2006" name="Genome Res.">
        <title>Massive genome erosion and functional adaptations provide insights into the symbiotic lifestyle of Sodalis glossinidius in the tsetse host.</title>
        <authorList>
            <person name="Toh H."/>
            <person name="Weiss B.L."/>
            <person name="Perkin S.A.H."/>
            <person name="Yamashita A."/>
            <person name="Oshima K."/>
            <person name="Hattori M."/>
            <person name="Aksoy S."/>
        </authorList>
    </citation>
    <scope>NUCLEOTIDE SEQUENCE [LARGE SCALE GENOMIC DNA]</scope>
    <source>
        <strain>morsitans</strain>
    </source>
</reference>
<sequence>MFDVLMYLFETYIHNEVEMRVDQDKLTDDLTQAGFHQDDIYNALNWLEKLADLQDGTGRAFALNADPLAMRIYTDEESQFLDTDCRGFLLFLEQIQVLNLETREMVIDRVMALDAAEFDLEDLKWVILMVLFNIPGCENAYQQMEDLVFEEDEQHLH</sequence>